<reference key="1">
    <citation type="journal article" date="2006" name="Proc. Natl. Acad. Sci. U.S.A.">
        <title>Molecular genetic anatomy of inter- and intraserotype variation in the human bacterial pathogen group A Streptococcus.</title>
        <authorList>
            <person name="Beres S.B."/>
            <person name="Richter E.W."/>
            <person name="Nagiec M.J."/>
            <person name="Sumby P."/>
            <person name="Porcella S.F."/>
            <person name="DeLeo F.R."/>
            <person name="Musser J.M."/>
        </authorList>
    </citation>
    <scope>NUCLEOTIDE SEQUENCE [LARGE SCALE GENOMIC DNA]</scope>
    <source>
        <strain>MGAS2096</strain>
    </source>
</reference>
<proteinExistence type="inferred from homology"/>
<feature type="chain" id="PRO_0000258575" description="Small ribosomal subunit protein uS10">
    <location>
        <begin position="1"/>
        <end position="102"/>
    </location>
</feature>
<organism>
    <name type="scientific">Streptococcus pyogenes serotype M12 (strain MGAS2096)</name>
    <dbReference type="NCBI Taxonomy" id="370553"/>
    <lineage>
        <taxon>Bacteria</taxon>
        <taxon>Bacillati</taxon>
        <taxon>Bacillota</taxon>
        <taxon>Bacilli</taxon>
        <taxon>Lactobacillales</taxon>
        <taxon>Streptococcaceae</taxon>
        <taxon>Streptococcus</taxon>
    </lineage>
</organism>
<dbReference type="EMBL" id="CP000261">
    <property type="protein sequence ID" value="ABF35098.1"/>
    <property type="molecule type" value="Genomic_DNA"/>
</dbReference>
<dbReference type="SMR" id="Q1JE60"/>
<dbReference type="KEGG" id="spj:MGAS2096_Spy0046"/>
<dbReference type="HOGENOM" id="CLU_122625_1_3_9"/>
<dbReference type="GO" id="GO:1990904">
    <property type="term" value="C:ribonucleoprotein complex"/>
    <property type="evidence" value="ECO:0007669"/>
    <property type="project" value="UniProtKB-KW"/>
</dbReference>
<dbReference type="GO" id="GO:0005840">
    <property type="term" value="C:ribosome"/>
    <property type="evidence" value="ECO:0007669"/>
    <property type="project" value="UniProtKB-KW"/>
</dbReference>
<dbReference type="GO" id="GO:0003735">
    <property type="term" value="F:structural constituent of ribosome"/>
    <property type="evidence" value="ECO:0007669"/>
    <property type="project" value="InterPro"/>
</dbReference>
<dbReference type="GO" id="GO:0000049">
    <property type="term" value="F:tRNA binding"/>
    <property type="evidence" value="ECO:0007669"/>
    <property type="project" value="UniProtKB-UniRule"/>
</dbReference>
<dbReference type="GO" id="GO:0006412">
    <property type="term" value="P:translation"/>
    <property type="evidence" value="ECO:0007669"/>
    <property type="project" value="UniProtKB-UniRule"/>
</dbReference>
<dbReference type="FunFam" id="3.30.70.600:FF:000001">
    <property type="entry name" value="30S ribosomal protein S10"/>
    <property type="match status" value="1"/>
</dbReference>
<dbReference type="Gene3D" id="3.30.70.600">
    <property type="entry name" value="Ribosomal protein S10 domain"/>
    <property type="match status" value="1"/>
</dbReference>
<dbReference type="HAMAP" id="MF_00508">
    <property type="entry name" value="Ribosomal_uS10"/>
    <property type="match status" value="1"/>
</dbReference>
<dbReference type="InterPro" id="IPR001848">
    <property type="entry name" value="Ribosomal_uS10"/>
</dbReference>
<dbReference type="InterPro" id="IPR018268">
    <property type="entry name" value="Ribosomal_uS10_CS"/>
</dbReference>
<dbReference type="InterPro" id="IPR027486">
    <property type="entry name" value="Ribosomal_uS10_dom"/>
</dbReference>
<dbReference type="InterPro" id="IPR036838">
    <property type="entry name" value="Ribosomal_uS10_dom_sf"/>
</dbReference>
<dbReference type="NCBIfam" id="NF001861">
    <property type="entry name" value="PRK00596.1"/>
    <property type="match status" value="1"/>
</dbReference>
<dbReference type="NCBIfam" id="TIGR01049">
    <property type="entry name" value="rpsJ_bact"/>
    <property type="match status" value="1"/>
</dbReference>
<dbReference type="PANTHER" id="PTHR11700">
    <property type="entry name" value="30S RIBOSOMAL PROTEIN S10 FAMILY MEMBER"/>
    <property type="match status" value="1"/>
</dbReference>
<dbReference type="Pfam" id="PF00338">
    <property type="entry name" value="Ribosomal_S10"/>
    <property type="match status" value="1"/>
</dbReference>
<dbReference type="PRINTS" id="PR00971">
    <property type="entry name" value="RIBOSOMALS10"/>
</dbReference>
<dbReference type="SMART" id="SM01403">
    <property type="entry name" value="Ribosomal_S10"/>
    <property type="match status" value="1"/>
</dbReference>
<dbReference type="SUPFAM" id="SSF54999">
    <property type="entry name" value="Ribosomal protein S10"/>
    <property type="match status" value="1"/>
</dbReference>
<dbReference type="PROSITE" id="PS00361">
    <property type="entry name" value="RIBOSOMAL_S10"/>
    <property type="match status" value="1"/>
</dbReference>
<comment type="function">
    <text evidence="1">Involved in the binding of tRNA to the ribosomes.</text>
</comment>
<comment type="subunit">
    <text evidence="1">Part of the 30S ribosomal subunit.</text>
</comment>
<comment type="similarity">
    <text evidence="1">Belongs to the universal ribosomal protein uS10 family.</text>
</comment>
<evidence type="ECO:0000255" key="1">
    <source>
        <dbReference type="HAMAP-Rule" id="MF_00508"/>
    </source>
</evidence>
<evidence type="ECO:0000305" key="2"/>
<keyword id="KW-0687">Ribonucleoprotein</keyword>
<keyword id="KW-0689">Ribosomal protein</keyword>
<gene>
    <name evidence="1" type="primary">rpsJ</name>
    <name type="ordered locus">MGAS2096_Spy0046</name>
</gene>
<protein>
    <recommendedName>
        <fullName evidence="1">Small ribosomal subunit protein uS10</fullName>
    </recommendedName>
    <alternativeName>
        <fullName evidence="2">30S ribosomal protein S10</fullName>
    </alternativeName>
</protein>
<name>RS10_STRPB</name>
<sequence length="102" mass="11641">MANKKIRIRLKAYEHRTLDTAAEKIVETATRTGAKVAGPVPLPTERSLYTIIRATHKYKDSREQFEMRTHKRLVDIINPTQKTVDALMKLDLPSGVNVEIKL</sequence>
<accession>Q1JE60</accession>